<accession>P43514</accession>
<comment type="function">
    <text>This protein is one of many from the eggshell of the gypsy moth.</text>
</comment>
<comment type="similarity">
    <text evidence="2">Belongs to the chorion protein family.</text>
</comment>
<organism>
    <name type="scientific">Lymantria dispar</name>
    <name type="common">Gypsy moth</name>
    <name type="synonym">Porthetria dispar</name>
    <dbReference type="NCBI Taxonomy" id="13123"/>
    <lineage>
        <taxon>Eukaryota</taxon>
        <taxon>Metazoa</taxon>
        <taxon>Ecdysozoa</taxon>
        <taxon>Arthropoda</taxon>
        <taxon>Hexapoda</taxon>
        <taxon>Insecta</taxon>
        <taxon>Pterygota</taxon>
        <taxon>Neoptera</taxon>
        <taxon>Endopterygota</taxon>
        <taxon>Lepidoptera</taxon>
        <taxon>Glossata</taxon>
        <taxon>Ditrysia</taxon>
        <taxon>Noctuoidea</taxon>
        <taxon>Erebidae</taxon>
        <taxon>Lymantriinae</taxon>
        <taxon>Lymantria</taxon>
    </lineage>
</organism>
<dbReference type="EMBL" id="U04660">
    <property type="protein sequence ID" value="AAA67860.1"/>
    <property type="molecule type" value="mRNA"/>
</dbReference>
<dbReference type="GO" id="GO:0042600">
    <property type="term" value="C:egg chorion"/>
    <property type="evidence" value="ECO:0007669"/>
    <property type="project" value="InterPro"/>
</dbReference>
<dbReference type="GO" id="GO:0005213">
    <property type="term" value="F:structural constituent of egg chorion"/>
    <property type="evidence" value="ECO:0007669"/>
    <property type="project" value="InterPro"/>
</dbReference>
<dbReference type="GO" id="GO:0007304">
    <property type="term" value="P:chorion-containing eggshell formation"/>
    <property type="evidence" value="ECO:0007669"/>
    <property type="project" value="InterPro"/>
</dbReference>
<dbReference type="InterPro" id="IPR002635">
    <property type="entry name" value="Chorion"/>
</dbReference>
<dbReference type="Pfam" id="PF01723">
    <property type="entry name" value="Chorion_1"/>
    <property type="match status" value="2"/>
</dbReference>
<name>CHA5_LYMDI</name>
<protein>
    <recommendedName>
        <fullName>Chorion class A protein Ld5</fullName>
    </recommendedName>
</protein>
<feature type="signal peptide" evidence="1">
    <location>
        <begin position="1"/>
        <end position="21"/>
    </location>
</feature>
<feature type="chain" id="PRO_0000005391" description="Chorion class A protein Ld5">
    <location>
        <begin position="22"/>
        <end position="143"/>
    </location>
</feature>
<reference key="1">
    <citation type="journal article" date="1994" name="J. Mol. Evol.">
        <title>Evolution of chorion gene families in lepidoptera: characterization of 15 cDNAs from the gypsy moth.</title>
        <authorList>
            <person name="Leclerc R.F."/>
            <person name="Regier J.C."/>
        </authorList>
    </citation>
    <scope>NUCLEOTIDE SEQUENCE [MRNA]</scope>
    <source>
        <tissue>Choriogenic follicle</tissue>
    </source>
</reference>
<keyword id="KW-0677">Repeat</keyword>
<keyword id="KW-0732">Signal</keyword>
<sequence>MNSFALLLVCIQACLVQSVFSQCTSRAAVAADRGIIGGYGLGAPCGLGYGLEAPYGWAGYADYGYPAGAYGIDAYGGIGEGNVAVAGELPVAGTTAVAGQVPIMGAVKFGGDVCAAGSVSIAGKCACGCXEGYGYGLGSPYLY</sequence>
<proteinExistence type="evidence at transcript level"/>
<evidence type="ECO:0000255" key="1"/>
<evidence type="ECO:0000305" key="2"/>